<keyword id="KW-0963">Cytoplasm</keyword>
<keyword id="KW-0396">Initiation factor</keyword>
<keyword id="KW-0648">Protein biosynthesis</keyword>
<keyword id="KW-0694">RNA-binding</keyword>
<name>EIF3D_ASPFC</name>
<accession>B0XU47</accession>
<feature type="chain" id="PRO_0000364168" description="Eukaryotic translation initiation factor 3 subunit D">
    <location>
        <begin position="1"/>
        <end position="585"/>
    </location>
</feature>
<feature type="region of interest" description="Disordered" evidence="3">
    <location>
        <begin position="110"/>
        <end position="152"/>
    </location>
</feature>
<feature type="region of interest" description="RNA gate" evidence="1">
    <location>
        <begin position="300"/>
        <end position="314"/>
    </location>
</feature>
<feature type="region of interest" description="Disordered" evidence="3">
    <location>
        <begin position="560"/>
        <end position="585"/>
    </location>
</feature>
<feature type="compositionally biased region" description="Gly residues" evidence="3">
    <location>
        <begin position="110"/>
        <end position="130"/>
    </location>
</feature>
<feature type="compositionally biased region" description="Acidic residues" evidence="3">
    <location>
        <begin position="565"/>
        <end position="585"/>
    </location>
</feature>
<dbReference type="EMBL" id="DS499595">
    <property type="protein sequence ID" value="EDP54970.1"/>
    <property type="molecule type" value="Genomic_DNA"/>
</dbReference>
<dbReference type="SMR" id="B0XU47"/>
<dbReference type="EnsemblFungi" id="EDP54970">
    <property type="protein sequence ID" value="EDP54970"/>
    <property type="gene ID" value="AFUB_030310"/>
</dbReference>
<dbReference type="VEuPathDB" id="FungiDB:AFUB_030310"/>
<dbReference type="HOGENOM" id="CLU_024521_2_0_1"/>
<dbReference type="OrthoDB" id="110657at5052"/>
<dbReference type="PhylomeDB" id="B0XU47"/>
<dbReference type="Proteomes" id="UP000001699">
    <property type="component" value="Unassembled WGS sequence"/>
</dbReference>
<dbReference type="GO" id="GO:0005829">
    <property type="term" value="C:cytosol"/>
    <property type="evidence" value="ECO:0007669"/>
    <property type="project" value="EnsemblFungi"/>
</dbReference>
<dbReference type="GO" id="GO:0016282">
    <property type="term" value="C:eukaryotic 43S preinitiation complex"/>
    <property type="evidence" value="ECO:0007669"/>
    <property type="project" value="UniProtKB-UniRule"/>
</dbReference>
<dbReference type="GO" id="GO:0033290">
    <property type="term" value="C:eukaryotic 48S preinitiation complex"/>
    <property type="evidence" value="ECO:0007669"/>
    <property type="project" value="UniProtKB-UniRule"/>
</dbReference>
<dbReference type="GO" id="GO:0071540">
    <property type="term" value="C:eukaryotic translation initiation factor 3 complex, eIF3e"/>
    <property type="evidence" value="ECO:0007669"/>
    <property type="project" value="EnsemblFungi"/>
</dbReference>
<dbReference type="GO" id="GO:0071541">
    <property type="term" value="C:eukaryotic translation initiation factor 3 complex, eIF3m"/>
    <property type="evidence" value="ECO:0007669"/>
    <property type="project" value="EnsemblFungi"/>
</dbReference>
<dbReference type="GO" id="GO:0098808">
    <property type="term" value="F:mRNA cap binding"/>
    <property type="evidence" value="ECO:0007669"/>
    <property type="project" value="UniProtKB-UniRule"/>
</dbReference>
<dbReference type="GO" id="GO:0003743">
    <property type="term" value="F:translation initiation factor activity"/>
    <property type="evidence" value="ECO:0007669"/>
    <property type="project" value="UniProtKB-UniRule"/>
</dbReference>
<dbReference type="GO" id="GO:0002191">
    <property type="term" value="P:cap-dependent translational initiation"/>
    <property type="evidence" value="ECO:0007669"/>
    <property type="project" value="UniProtKB-UniRule"/>
</dbReference>
<dbReference type="GO" id="GO:0001732">
    <property type="term" value="P:formation of cytoplasmic translation initiation complex"/>
    <property type="evidence" value="ECO:0007669"/>
    <property type="project" value="UniProtKB-UniRule"/>
</dbReference>
<dbReference type="HAMAP" id="MF_03003">
    <property type="entry name" value="eIF3d"/>
    <property type="match status" value="1"/>
</dbReference>
<dbReference type="InterPro" id="IPR007783">
    <property type="entry name" value="eIF3d"/>
</dbReference>
<dbReference type="PANTHER" id="PTHR12399">
    <property type="entry name" value="EUKARYOTIC TRANSLATION INITIATION FACTOR 3 SUBUNIT 7"/>
    <property type="match status" value="1"/>
</dbReference>
<dbReference type="PANTHER" id="PTHR12399:SF0">
    <property type="entry name" value="EUKARYOTIC TRANSLATION INITIATION FACTOR 3 SUBUNIT D"/>
    <property type="match status" value="1"/>
</dbReference>
<dbReference type="Pfam" id="PF05091">
    <property type="entry name" value="eIF-3_zeta"/>
    <property type="match status" value="1"/>
</dbReference>
<dbReference type="PIRSF" id="PIRSF016281">
    <property type="entry name" value="EIF-3_zeta"/>
    <property type="match status" value="1"/>
</dbReference>
<evidence type="ECO:0000250" key="1">
    <source>
        <dbReference type="UniProtKB" id="K7IM66"/>
    </source>
</evidence>
<evidence type="ECO:0000255" key="2">
    <source>
        <dbReference type="HAMAP-Rule" id="MF_03003"/>
    </source>
</evidence>
<evidence type="ECO:0000256" key="3">
    <source>
        <dbReference type="SAM" id="MobiDB-lite"/>
    </source>
</evidence>
<proteinExistence type="inferred from homology"/>
<gene>
    <name type="ORF">AFUB_030310</name>
</gene>
<sequence>MAPMSIADLVAALPAEDTWGPATPSDNMLDGVPYAPFSKGDKLGRMADWTGDGKDRDRSGRQAYNRNYRDQQVYGAGTSSLFNIQVAEDESSFSVVDNTRTSTKRTFARGGGTVFRGRGQRGVGQRGGRAGFQRVGAGRGQGGDRYYDNRSARSNRGRRFGWKDYDKPQRTREPSVNVRPDWTMLEEVDFNRLSKLNLEAPEGEDLDSYGFLYYYDRSYDKAPVKNAERKLQALERAAYNVTTSQDPVIQELAEKNEATVFATSDILSMLMCAPRSVYSWDIVIVHQGDKIYFDKREGASIDLVTVNENAADAPVETADSSGKQESINTPSALALEATFINHNFALQTVVESEESKVTFNHPNPFYNAAEETEPLASKGYKYRRFDLSLQDDEEPLNMIVRTEVDAVMKNPVGGEDQHLIVKALNEFDSKAPGSGGALDWRSKLWSQRGAVVATEMKNNSIKLARWTTQAILAKADAMKLGFVSRANPRSATSHVILGVVGYKPREFAAQMNLNLGNGWGIVRTIVDRIRALDAEEEEDKVKKYVLIKDPNRPVIRLYSVPPNTFEEDDEAAEEQEEKAEDESEE</sequence>
<reference key="1">
    <citation type="journal article" date="2008" name="PLoS Genet.">
        <title>Genomic islands in the pathogenic filamentous fungus Aspergillus fumigatus.</title>
        <authorList>
            <person name="Fedorova N.D."/>
            <person name="Khaldi N."/>
            <person name="Joardar V.S."/>
            <person name="Maiti R."/>
            <person name="Amedeo P."/>
            <person name="Anderson M.J."/>
            <person name="Crabtree J."/>
            <person name="Silva J.C."/>
            <person name="Badger J.H."/>
            <person name="Albarraq A."/>
            <person name="Angiuoli S."/>
            <person name="Bussey H."/>
            <person name="Bowyer P."/>
            <person name="Cotty P.J."/>
            <person name="Dyer P.S."/>
            <person name="Egan A."/>
            <person name="Galens K."/>
            <person name="Fraser-Liggett C.M."/>
            <person name="Haas B.J."/>
            <person name="Inman J.M."/>
            <person name="Kent R."/>
            <person name="Lemieux S."/>
            <person name="Malavazi I."/>
            <person name="Orvis J."/>
            <person name="Roemer T."/>
            <person name="Ronning C.M."/>
            <person name="Sundaram J.P."/>
            <person name="Sutton G."/>
            <person name="Turner G."/>
            <person name="Venter J.C."/>
            <person name="White O.R."/>
            <person name="Whitty B.R."/>
            <person name="Youngman P."/>
            <person name="Wolfe K.H."/>
            <person name="Goldman G.H."/>
            <person name="Wortman J.R."/>
            <person name="Jiang B."/>
            <person name="Denning D.W."/>
            <person name="Nierman W.C."/>
        </authorList>
    </citation>
    <scope>NUCLEOTIDE SEQUENCE [LARGE SCALE GENOMIC DNA]</scope>
    <source>
        <strain>CBS 144.89 / FGSC A1163 / CEA10</strain>
    </source>
</reference>
<organism>
    <name type="scientific">Aspergillus fumigatus (strain CBS 144.89 / FGSC A1163 / CEA10)</name>
    <name type="common">Neosartorya fumigata</name>
    <dbReference type="NCBI Taxonomy" id="451804"/>
    <lineage>
        <taxon>Eukaryota</taxon>
        <taxon>Fungi</taxon>
        <taxon>Dikarya</taxon>
        <taxon>Ascomycota</taxon>
        <taxon>Pezizomycotina</taxon>
        <taxon>Eurotiomycetes</taxon>
        <taxon>Eurotiomycetidae</taxon>
        <taxon>Eurotiales</taxon>
        <taxon>Aspergillaceae</taxon>
        <taxon>Aspergillus</taxon>
        <taxon>Aspergillus subgen. Fumigati</taxon>
    </lineage>
</organism>
<protein>
    <recommendedName>
        <fullName evidence="2">Eukaryotic translation initiation factor 3 subunit D</fullName>
        <shortName evidence="2">eIF3d</shortName>
    </recommendedName>
</protein>
<comment type="function">
    <text evidence="2">mRNA cap-binding component of the eukaryotic translation initiation factor 3 (eIF-3) complex, which is involved in protein synthesis of a specialized repertoire of mRNAs and, together with other initiation factors, stimulates binding of mRNA and methionyl-tRNAi to the 40S ribosome. The eIF-3 complex specifically targets and initiates translation of a subset of mRNAs involved in cell proliferation. In the eIF-3 complex, eif3d specifically recognizes and binds the 7-methylguanosine cap of a subset of mRNAs.</text>
</comment>
<comment type="subunit">
    <text evidence="2">Component of the eukaryotic translation initiation factor 3 (eIF-3) complex.</text>
</comment>
<comment type="subcellular location">
    <subcellularLocation>
        <location evidence="2">Cytoplasm</location>
    </subcellularLocation>
</comment>
<comment type="domain">
    <text evidence="2">The RNA gate region regulates mRNA cap recognition to prevent promiscuous mRNA-binding before assembly of eif3d into the full eukaryotic translation initiation factor 3 (eIF-3) complex.</text>
</comment>
<comment type="similarity">
    <text evidence="2">Belongs to the eIF-3 subunit D family.</text>
</comment>